<keyword id="KW-0963">Cytoplasm</keyword>
<keyword id="KW-0444">Lipid biosynthesis</keyword>
<keyword id="KW-0443">Lipid metabolism</keyword>
<keyword id="KW-0594">Phospholipid biosynthesis</keyword>
<keyword id="KW-1208">Phospholipid metabolism</keyword>
<keyword id="KW-1185">Reference proteome</keyword>
<keyword id="KW-0808">Transferase</keyword>
<name>PLSX_CLOK5</name>
<organism>
    <name type="scientific">Clostridium kluyveri (strain ATCC 8527 / DSM 555 / NBRC 12016 / NCIMB 10680 / K1)</name>
    <dbReference type="NCBI Taxonomy" id="431943"/>
    <lineage>
        <taxon>Bacteria</taxon>
        <taxon>Bacillati</taxon>
        <taxon>Bacillota</taxon>
        <taxon>Clostridia</taxon>
        <taxon>Eubacteriales</taxon>
        <taxon>Clostridiaceae</taxon>
        <taxon>Clostridium</taxon>
    </lineage>
</organism>
<accession>A5N805</accession>
<sequence length="334" mass="36730">MIIAVDGMGGDFAPYAVVEGIIEAVKEQDINIIITGKKELIEAELKKYEYEREKIRILDTREVITTSESPVMALRRKKDSSLVKALQLVKEGKADAAISAGSTGALMSGATLIVGRIKGIERVALAPMIPGKNGAFMIIDAGANVDCKPHYLLQFSLMGKIYFENVLKIKEPSIGLVNIGTEEEKGNELTKNTYKLLKDMDFNFVGNVEPREATNGDVNILVCDGFVGNTILKTYEGVSLNLIHMIKEEIMKSTTSKLAGVFLKPVFKKIKSRLDYSEYGGSAFLGCKGICVKAHGSSNGKAFKNAIKQAVICYDNKVIDKIKFEIEKIYNREE</sequence>
<comment type="function">
    <text evidence="1">Catalyzes the reversible formation of acyl-phosphate (acyl-PO(4)) from acyl-[acyl-carrier-protein] (acyl-ACP). This enzyme utilizes acyl-ACP as fatty acyl donor, but not acyl-CoA.</text>
</comment>
<comment type="catalytic activity">
    <reaction evidence="1">
        <text>a fatty acyl-[ACP] + phosphate = an acyl phosphate + holo-[ACP]</text>
        <dbReference type="Rhea" id="RHEA:42292"/>
        <dbReference type="Rhea" id="RHEA-COMP:9685"/>
        <dbReference type="Rhea" id="RHEA-COMP:14125"/>
        <dbReference type="ChEBI" id="CHEBI:43474"/>
        <dbReference type="ChEBI" id="CHEBI:59918"/>
        <dbReference type="ChEBI" id="CHEBI:64479"/>
        <dbReference type="ChEBI" id="CHEBI:138651"/>
        <dbReference type="EC" id="2.3.1.274"/>
    </reaction>
</comment>
<comment type="pathway">
    <text evidence="1">Lipid metabolism; phospholipid metabolism.</text>
</comment>
<comment type="subunit">
    <text evidence="1">Homodimer. Probably interacts with PlsY.</text>
</comment>
<comment type="subcellular location">
    <subcellularLocation>
        <location evidence="1">Cytoplasm</location>
    </subcellularLocation>
    <text evidence="1">Associated with the membrane possibly through PlsY.</text>
</comment>
<comment type="similarity">
    <text evidence="1">Belongs to the PlsX family.</text>
</comment>
<reference key="1">
    <citation type="journal article" date="2008" name="Proc. Natl. Acad. Sci. U.S.A.">
        <title>The genome of Clostridium kluyveri, a strict anaerobe with unique metabolic features.</title>
        <authorList>
            <person name="Seedorf H."/>
            <person name="Fricke W.F."/>
            <person name="Veith B."/>
            <person name="Brueggemann H."/>
            <person name="Liesegang H."/>
            <person name="Strittmatter A."/>
            <person name="Miethke M."/>
            <person name="Buckel W."/>
            <person name="Hinderberger J."/>
            <person name="Li F."/>
            <person name="Hagemeier C."/>
            <person name="Thauer R.K."/>
            <person name="Gottschalk G."/>
        </authorList>
    </citation>
    <scope>NUCLEOTIDE SEQUENCE [LARGE SCALE GENOMIC DNA]</scope>
    <source>
        <strain>ATCC 8527 / DSM 555 / NBRC 12016 / NCIMB 10680 / K1</strain>
    </source>
</reference>
<feature type="chain" id="PRO_1000074161" description="Phosphate acyltransferase">
    <location>
        <begin position="1"/>
        <end position="334"/>
    </location>
</feature>
<protein>
    <recommendedName>
        <fullName evidence="1">Phosphate acyltransferase</fullName>
        <ecNumber evidence="1">2.3.1.274</ecNumber>
    </recommendedName>
    <alternativeName>
        <fullName evidence="1">Acyl-ACP phosphotransacylase</fullName>
    </alternativeName>
    <alternativeName>
        <fullName evidence="1">Acyl-[acyl-carrier-protein]--phosphate acyltransferase</fullName>
    </alternativeName>
    <alternativeName>
        <fullName evidence="1">Phosphate-acyl-ACP acyltransferase</fullName>
    </alternativeName>
</protein>
<evidence type="ECO:0000255" key="1">
    <source>
        <dbReference type="HAMAP-Rule" id="MF_00019"/>
    </source>
</evidence>
<gene>
    <name evidence="1" type="primary">plsX</name>
    <name type="ordered locus">CKL_1394</name>
</gene>
<proteinExistence type="inferred from homology"/>
<dbReference type="EC" id="2.3.1.274" evidence="1"/>
<dbReference type="EMBL" id="CP000673">
    <property type="protein sequence ID" value="EDK33436.1"/>
    <property type="molecule type" value="Genomic_DNA"/>
</dbReference>
<dbReference type="RefSeq" id="WP_012101783.1">
    <property type="nucleotide sequence ID" value="NC_009706.1"/>
</dbReference>
<dbReference type="SMR" id="A5N805"/>
<dbReference type="STRING" id="431943.CKL_1394"/>
<dbReference type="KEGG" id="ckl:CKL_1394"/>
<dbReference type="eggNOG" id="COG0416">
    <property type="taxonomic scope" value="Bacteria"/>
</dbReference>
<dbReference type="HOGENOM" id="CLU_039379_1_1_9"/>
<dbReference type="UniPathway" id="UPA00085"/>
<dbReference type="Proteomes" id="UP000002411">
    <property type="component" value="Chromosome"/>
</dbReference>
<dbReference type="GO" id="GO:0005737">
    <property type="term" value="C:cytoplasm"/>
    <property type="evidence" value="ECO:0007669"/>
    <property type="project" value="UniProtKB-SubCell"/>
</dbReference>
<dbReference type="GO" id="GO:0043811">
    <property type="term" value="F:phosphate:acyl-[acyl carrier protein] acyltransferase activity"/>
    <property type="evidence" value="ECO:0007669"/>
    <property type="project" value="UniProtKB-UniRule"/>
</dbReference>
<dbReference type="GO" id="GO:0006633">
    <property type="term" value="P:fatty acid biosynthetic process"/>
    <property type="evidence" value="ECO:0007669"/>
    <property type="project" value="UniProtKB-UniRule"/>
</dbReference>
<dbReference type="GO" id="GO:0008654">
    <property type="term" value="P:phospholipid biosynthetic process"/>
    <property type="evidence" value="ECO:0007669"/>
    <property type="project" value="UniProtKB-KW"/>
</dbReference>
<dbReference type="Gene3D" id="3.40.718.10">
    <property type="entry name" value="Isopropylmalate Dehydrogenase"/>
    <property type="match status" value="1"/>
</dbReference>
<dbReference type="HAMAP" id="MF_00019">
    <property type="entry name" value="PlsX"/>
    <property type="match status" value="1"/>
</dbReference>
<dbReference type="InterPro" id="IPR003664">
    <property type="entry name" value="FA_synthesis"/>
</dbReference>
<dbReference type="InterPro" id="IPR012281">
    <property type="entry name" value="Phospholipid_synth_PlsX-like"/>
</dbReference>
<dbReference type="NCBIfam" id="TIGR00182">
    <property type="entry name" value="plsX"/>
    <property type="match status" value="1"/>
</dbReference>
<dbReference type="PANTHER" id="PTHR30100">
    <property type="entry name" value="FATTY ACID/PHOSPHOLIPID SYNTHESIS PROTEIN PLSX"/>
    <property type="match status" value="1"/>
</dbReference>
<dbReference type="PANTHER" id="PTHR30100:SF1">
    <property type="entry name" value="PHOSPHATE ACYLTRANSFERASE"/>
    <property type="match status" value="1"/>
</dbReference>
<dbReference type="Pfam" id="PF02504">
    <property type="entry name" value="FA_synthesis"/>
    <property type="match status" value="1"/>
</dbReference>
<dbReference type="PIRSF" id="PIRSF002465">
    <property type="entry name" value="Phsphlp_syn_PlsX"/>
    <property type="match status" value="1"/>
</dbReference>
<dbReference type="SUPFAM" id="SSF53659">
    <property type="entry name" value="Isocitrate/Isopropylmalate dehydrogenase-like"/>
    <property type="match status" value="1"/>
</dbReference>